<accession>Q3KHM1</accession>
<organism>
    <name type="scientific">Pseudomonas fluorescens (strain Pf0-1)</name>
    <dbReference type="NCBI Taxonomy" id="205922"/>
    <lineage>
        <taxon>Bacteria</taxon>
        <taxon>Pseudomonadati</taxon>
        <taxon>Pseudomonadota</taxon>
        <taxon>Gammaproteobacteria</taxon>
        <taxon>Pseudomonadales</taxon>
        <taxon>Pseudomonadaceae</taxon>
        <taxon>Pseudomonas</taxon>
    </lineage>
</organism>
<name>LEPA_PSEPF</name>
<keyword id="KW-0997">Cell inner membrane</keyword>
<keyword id="KW-1003">Cell membrane</keyword>
<keyword id="KW-0342">GTP-binding</keyword>
<keyword id="KW-0378">Hydrolase</keyword>
<keyword id="KW-0472">Membrane</keyword>
<keyword id="KW-0547">Nucleotide-binding</keyword>
<keyword id="KW-0648">Protein biosynthesis</keyword>
<reference key="1">
    <citation type="journal article" date="2009" name="Genome Biol.">
        <title>Genomic and genetic analyses of diversity and plant interactions of Pseudomonas fluorescens.</title>
        <authorList>
            <person name="Silby M.W."/>
            <person name="Cerdeno-Tarraga A.M."/>
            <person name="Vernikos G.S."/>
            <person name="Giddens S.R."/>
            <person name="Jackson R.W."/>
            <person name="Preston G.M."/>
            <person name="Zhang X.-X."/>
            <person name="Moon C.D."/>
            <person name="Gehrig S.M."/>
            <person name="Godfrey S.A.C."/>
            <person name="Knight C.G."/>
            <person name="Malone J.G."/>
            <person name="Robinson Z."/>
            <person name="Spiers A.J."/>
            <person name="Harris S."/>
            <person name="Challis G.L."/>
            <person name="Yaxley A.M."/>
            <person name="Harris D."/>
            <person name="Seeger K."/>
            <person name="Murphy L."/>
            <person name="Rutter S."/>
            <person name="Squares R."/>
            <person name="Quail M.A."/>
            <person name="Saunders E."/>
            <person name="Mavromatis K."/>
            <person name="Brettin T.S."/>
            <person name="Bentley S.D."/>
            <person name="Hothersall J."/>
            <person name="Stephens E."/>
            <person name="Thomas C.M."/>
            <person name="Parkhill J."/>
            <person name="Levy S.B."/>
            <person name="Rainey P.B."/>
            <person name="Thomson N.R."/>
        </authorList>
    </citation>
    <scope>NUCLEOTIDE SEQUENCE [LARGE SCALE GENOMIC DNA]</scope>
    <source>
        <strain>Pf0-1</strain>
    </source>
</reference>
<sequence>MSDLSHIRNFSIIAHIDHGKSTLADRFIQMCGGLAEREMEAQVLDSMDLERERGITIKAHSVTLYYKAKDGVTYQLNFIDTPGHVDFTYEVSRSLAACEGALLVVDAGQGVEAQSVANCYTAIEQGLEVMPVLNKIDLPQAEPDRVKDEIEKIIGIDATDAVTCSAKTGLGVDEVLERLVATIPAPIGNIEDPLQALIIDSWFDNYLGVVSLVRVRHGRVKKGDKILVKSTGKVHLVDSVGVFNPKHTATADLKAGEVGFIIASIKDIHGAPVGDTLTLSSTPDVPVLPGFKRIQPQVYAGLFPVSSDDFEDFREALQKLTLNDSSLQYTPESSDALGFGFRCGFLGMLHMEIIQERLEREYDLDLITTAPTVIFELVLKTGETIYVDNPSKLPDVSSIEDMREPIVRANILVPQEHLGNVITLCIEKRGVQVDMLFLGNQVQVTYDLPMNEVVLDFFDRLKSTSRGYASLDYHFDRYQSANLVKLDVLINGDKVDALALIVHRDNSHFKGRQLTEKMKELIPRQMFDVAIQAAIGGQIVARTTVKALRKNVLAKCYGGDVSRKKKLLEKQKAGKKRMKQVGNVEIPQEAFLAVLRLE</sequence>
<proteinExistence type="inferred from homology"/>
<protein>
    <recommendedName>
        <fullName evidence="1">Elongation factor 4</fullName>
        <shortName evidence="1">EF-4</shortName>
        <ecNumber evidence="1">3.6.5.n1</ecNumber>
    </recommendedName>
    <alternativeName>
        <fullName evidence="1">Ribosomal back-translocase LepA</fullName>
    </alternativeName>
</protein>
<comment type="function">
    <text evidence="1">Required for accurate and efficient protein synthesis under certain stress conditions. May act as a fidelity factor of the translation reaction, by catalyzing a one-codon backward translocation of tRNAs on improperly translocated ribosomes. Back-translocation proceeds from a post-translocation (POST) complex to a pre-translocation (PRE) complex, thus giving elongation factor G a second chance to translocate the tRNAs correctly. Binds to ribosomes in a GTP-dependent manner.</text>
</comment>
<comment type="catalytic activity">
    <reaction evidence="1">
        <text>GTP + H2O = GDP + phosphate + H(+)</text>
        <dbReference type="Rhea" id="RHEA:19669"/>
        <dbReference type="ChEBI" id="CHEBI:15377"/>
        <dbReference type="ChEBI" id="CHEBI:15378"/>
        <dbReference type="ChEBI" id="CHEBI:37565"/>
        <dbReference type="ChEBI" id="CHEBI:43474"/>
        <dbReference type="ChEBI" id="CHEBI:58189"/>
        <dbReference type="EC" id="3.6.5.n1"/>
    </reaction>
</comment>
<comment type="subcellular location">
    <subcellularLocation>
        <location evidence="1">Cell inner membrane</location>
        <topology evidence="1">Peripheral membrane protein</topology>
        <orientation evidence="1">Cytoplasmic side</orientation>
    </subcellularLocation>
</comment>
<comment type="similarity">
    <text evidence="1">Belongs to the TRAFAC class translation factor GTPase superfamily. Classic translation factor GTPase family. LepA subfamily.</text>
</comment>
<evidence type="ECO:0000255" key="1">
    <source>
        <dbReference type="HAMAP-Rule" id="MF_00071"/>
    </source>
</evidence>
<dbReference type="EC" id="3.6.5.n1" evidence="1"/>
<dbReference type="EMBL" id="CP000094">
    <property type="protein sequence ID" value="ABA72735.1"/>
    <property type="molecule type" value="Genomic_DNA"/>
</dbReference>
<dbReference type="RefSeq" id="WP_011332587.1">
    <property type="nucleotide sequence ID" value="NC_007492.2"/>
</dbReference>
<dbReference type="SMR" id="Q3KHM1"/>
<dbReference type="KEGG" id="pfo:Pfl01_0992"/>
<dbReference type="eggNOG" id="COG0481">
    <property type="taxonomic scope" value="Bacteria"/>
</dbReference>
<dbReference type="HOGENOM" id="CLU_009995_3_3_6"/>
<dbReference type="Proteomes" id="UP000002704">
    <property type="component" value="Chromosome"/>
</dbReference>
<dbReference type="GO" id="GO:0005886">
    <property type="term" value="C:plasma membrane"/>
    <property type="evidence" value="ECO:0007669"/>
    <property type="project" value="UniProtKB-SubCell"/>
</dbReference>
<dbReference type="GO" id="GO:0005525">
    <property type="term" value="F:GTP binding"/>
    <property type="evidence" value="ECO:0007669"/>
    <property type="project" value="UniProtKB-UniRule"/>
</dbReference>
<dbReference type="GO" id="GO:0003924">
    <property type="term" value="F:GTPase activity"/>
    <property type="evidence" value="ECO:0007669"/>
    <property type="project" value="UniProtKB-UniRule"/>
</dbReference>
<dbReference type="GO" id="GO:0097216">
    <property type="term" value="F:guanosine tetraphosphate binding"/>
    <property type="evidence" value="ECO:0007669"/>
    <property type="project" value="UniProtKB-ARBA"/>
</dbReference>
<dbReference type="GO" id="GO:0043022">
    <property type="term" value="F:ribosome binding"/>
    <property type="evidence" value="ECO:0007669"/>
    <property type="project" value="UniProtKB-UniRule"/>
</dbReference>
<dbReference type="GO" id="GO:0003746">
    <property type="term" value="F:translation elongation factor activity"/>
    <property type="evidence" value="ECO:0007669"/>
    <property type="project" value="UniProtKB-UniRule"/>
</dbReference>
<dbReference type="GO" id="GO:0045727">
    <property type="term" value="P:positive regulation of translation"/>
    <property type="evidence" value="ECO:0007669"/>
    <property type="project" value="UniProtKB-UniRule"/>
</dbReference>
<dbReference type="CDD" id="cd03699">
    <property type="entry name" value="EF4_II"/>
    <property type="match status" value="1"/>
</dbReference>
<dbReference type="CDD" id="cd16260">
    <property type="entry name" value="EF4_III"/>
    <property type="match status" value="1"/>
</dbReference>
<dbReference type="CDD" id="cd01890">
    <property type="entry name" value="LepA"/>
    <property type="match status" value="1"/>
</dbReference>
<dbReference type="CDD" id="cd03709">
    <property type="entry name" value="lepA_C"/>
    <property type="match status" value="1"/>
</dbReference>
<dbReference type="FunFam" id="3.40.50.300:FF:000078">
    <property type="entry name" value="Elongation factor 4"/>
    <property type="match status" value="1"/>
</dbReference>
<dbReference type="FunFam" id="2.40.30.10:FF:000015">
    <property type="entry name" value="Translation factor GUF1, mitochondrial"/>
    <property type="match status" value="1"/>
</dbReference>
<dbReference type="FunFam" id="3.30.70.240:FF:000007">
    <property type="entry name" value="Translation factor GUF1, mitochondrial"/>
    <property type="match status" value="1"/>
</dbReference>
<dbReference type="FunFam" id="3.30.70.2570:FF:000001">
    <property type="entry name" value="Translation factor GUF1, mitochondrial"/>
    <property type="match status" value="1"/>
</dbReference>
<dbReference type="FunFam" id="3.30.70.870:FF:000004">
    <property type="entry name" value="Translation factor GUF1, mitochondrial"/>
    <property type="match status" value="1"/>
</dbReference>
<dbReference type="Gene3D" id="3.30.70.240">
    <property type="match status" value="1"/>
</dbReference>
<dbReference type="Gene3D" id="3.30.70.2570">
    <property type="entry name" value="Elongation factor 4, C-terminal domain"/>
    <property type="match status" value="1"/>
</dbReference>
<dbReference type="Gene3D" id="3.30.70.870">
    <property type="entry name" value="Elongation Factor G (Translational Gtpase), domain 3"/>
    <property type="match status" value="1"/>
</dbReference>
<dbReference type="Gene3D" id="3.40.50.300">
    <property type="entry name" value="P-loop containing nucleotide triphosphate hydrolases"/>
    <property type="match status" value="1"/>
</dbReference>
<dbReference type="Gene3D" id="2.40.30.10">
    <property type="entry name" value="Translation factors"/>
    <property type="match status" value="1"/>
</dbReference>
<dbReference type="HAMAP" id="MF_00071">
    <property type="entry name" value="LepA"/>
    <property type="match status" value="1"/>
</dbReference>
<dbReference type="InterPro" id="IPR006297">
    <property type="entry name" value="EF-4"/>
</dbReference>
<dbReference type="InterPro" id="IPR035647">
    <property type="entry name" value="EFG_III/V"/>
</dbReference>
<dbReference type="InterPro" id="IPR000640">
    <property type="entry name" value="EFG_V-like"/>
</dbReference>
<dbReference type="InterPro" id="IPR004161">
    <property type="entry name" value="EFTu-like_2"/>
</dbReference>
<dbReference type="InterPro" id="IPR038363">
    <property type="entry name" value="LepA_C_sf"/>
</dbReference>
<dbReference type="InterPro" id="IPR013842">
    <property type="entry name" value="LepA_CTD"/>
</dbReference>
<dbReference type="InterPro" id="IPR035654">
    <property type="entry name" value="LepA_IV"/>
</dbReference>
<dbReference type="InterPro" id="IPR027417">
    <property type="entry name" value="P-loop_NTPase"/>
</dbReference>
<dbReference type="InterPro" id="IPR005225">
    <property type="entry name" value="Small_GTP-bd"/>
</dbReference>
<dbReference type="InterPro" id="IPR000795">
    <property type="entry name" value="T_Tr_GTP-bd_dom"/>
</dbReference>
<dbReference type="NCBIfam" id="TIGR01393">
    <property type="entry name" value="lepA"/>
    <property type="match status" value="1"/>
</dbReference>
<dbReference type="NCBIfam" id="TIGR00231">
    <property type="entry name" value="small_GTP"/>
    <property type="match status" value="1"/>
</dbReference>
<dbReference type="PANTHER" id="PTHR43512:SF4">
    <property type="entry name" value="TRANSLATION FACTOR GUF1 HOMOLOG, CHLOROPLASTIC"/>
    <property type="match status" value="1"/>
</dbReference>
<dbReference type="PANTHER" id="PTHR43512">
    <property type="entry name" value="TRANSLATION FACTOR GUF1-RELATED"/>
    <property type="match status" value="1"/>
</dbReference>
<dbReference type="Pfam" id="PF00679">
    <property type="entry name" value="EFG_C"/>
    <property type="match status" value="1"/>
</dbReference>
<dbReference type="Pfam" id="PF00009">
    <property type="entry name" value="GTP_EFTU"/>
    <property type="match status" value="1"/>
</dbReference>
<dbReference type="Pfam" id="PF03144">
    <property type="entry name" value="GTP_EFTU_D2"/>
    <property type="match status" value="1"/>
</dbReference>
<dbReference type="Pfam" id="PF06421">
    <property type="entry name" value="LepA_C"/>
    <property type="match status" value="1"/>
</dbReference>
<dbReference type="PRINTS" id="PR00315">
    <property type="entry name" value="ELONGATNFCT"/>
</dbReference>
<dbReference type="SUPFAM" id="SSF54980">
    <property type="entry name" value="EF-G C-terminal domain-like"/>
    <property type="match status" value="2"/>
</dbReference>
<dbReference type="SUPFAM" id="SSF52540">
    <property type="entry name" value="P-loop containing nucleoside triphosphate hydrolases"/>
    <property type="match status" value="1"/>
</dbReference>
<dbReference type="PROSITE" id="PS51722">
    <property type="entry name" value="G_TR_2"/>
    <property type="match status" value="1"/>
</dbReference>
<gene>
    <name evidence="1" type="primary">lepA</name>
    <name type="ordered locus">Pfl01_0992</name>
</gene>
<feature type="chain" id="PRO_0000224785" description="Elongation factor 4">
    <location>
        <begin position="1"/>
        <end position="598"/>
    </location>
</feature>
<feature type="domain" description="tr-type G">
    <location>
        <begin position="5"/>
        <end position="187"/>
    </location>
</feature>
<feature type="binding site" evidence="1">
    <location>
        <begin position="17"/>
        <end position="22"/>
    </location>
    <ligand>
        <name>GTP</name>
        <dbReference type="ChEBI" id="CHEBI:37565"/>
    </ligand>
</feature>
<feature type="binding site" evidence="1">
    <location>
        <begin position="134"/>
        <end position="137"/>
    </location>
    <ligand>
        <name>GTP</name>
        <dbReference type="ChEBI" id="CHEBI:37565"/>
    </ligand>
</feature>